<organism>
    <name type="scientific">Pectobacterium carotovorum subsp. carotovorum (strain PC1)</name>
    <dbReference type="NCBI Taxonomy" id="561230"/>
    <lineage>
        <taxon>Bacteria</taxon>
        <taxon>Pseudomonadati</taxon>
        <taxon>Pseudomonadota</taxon>
        <taxon>Gammaproteobacteria</taxon>
        <taxon>Enterobacterales</taxon>
        <taxon>Pectobacteriaceae</taxon>
        <taxon>Pectobacterium</taxon>
    </lineage>
</organism>
<proteinExistence type="inferred from homology"/>
<sequence length="333" mass="37547">MHKHRKPTEADVTPESLFYQRRRILKALGISAAALSLPFSAQADLLAWFKGTDKPKAPPGKPLTFSQPADWKLDLPLTPEDKVTGYNNFYEFGLDKADPAANAGGLKTEGWTIKIDGDVAKPLTLDIDDLLKRFPLEERIYRFRCVEAWSMVIPWVGFELAKLIKFAEPTSNARYVAFQTLYDPEQMPGQKDRFMGGGLDYPYVEGLRMDEAMNPLALLAVGVYGKTLPPQNGAPIRLVTPWKYGFKNIKSIVHIRFTREKPPCTWNLAAPDEYGFYANVNPHVDHPRWSQATERVIGSGGLLNVERQPTLLFNGYAEQVASLYRGLNLRDNF</sequence>
<feature type="signal peptide" description="Tat-type signal" evidence="1">
    <location>
        <begin position="1"/>
        <end position="43"/>
    </location>
</feature>
<feature type="chain" id="PRO_5000486329" description="Protein-methionine-sulfoxide reductase catalytic subunit MsrP" evidence="1">
    <location>
        <begin position="44"/>
        <end position="333"/>
    </location>
</feature>
<feature type="binding site" evidence="1">
    <location>
        <position position="87"/>
    </location>
    <ligand>
        <name>Mo-molybdopterin</name>
        <dbReference type="ChEBI" id="CHEBI:71302"/>
    </ligand>
</feature>
<feature type="binding site" evidence="1">
    <location>
        <begin position="90"/>
        <end position="91"/>
    </location>
    <ligand>
        <name>Mo-molybdopterin</name>
        <dbReference type="ChEBI" id="CHEBI:71302"/>
    </ligand>
</feature>
<feature type="binding site" evidence="1">
    <location>
        <position position="145"/>
    </location>
    <ligand>
        <name>Mo-molybdopterin</name>
        <dbReference type="ChEBI" id="CHEBI:71302"/>
    </ligand>
    <ligandPart>
        <name>Mo</name>
        <dbReference type="ChEBI" id="CHEBI:28685"/>
    </ligandPart>
</feature>
<feature type="binding site" evidence="1">
    <location>
        <position position="180"/>
    </location>
    <ligand>
        <name>Mo-molybdopterin</name>
        <dbReference type="ChEBI" id="CHEBI:71302"/>
    </ligand>
</feature>
<feature type="binding site" evidence="1">
    <location>
        <position position="232"/>
    </location>
    <ligand>
        <name>Mo-molybdopterin</name>
        <dbReference type="ChEBI" id="CHEBI:71302"/>
    </ligand>
</feature>
<feature type="binding site" evidence="1">
    <location>
        <position position="237"/>
    </location>
    <ligand>
        <name>Mo-molybdopterin</name>
        <dbReference type="ChEBI" id="CHEBI:71302"/>
    </ligand>
</feature>
<feature type="binding site" evidence="1">
    <location>
        <begin position="248"/>
        <end position="250"/>
    </location>
    <ligand>
        <name>Mo-molybdopterin</name>
        <dbReference type="ChEBI" id="CHEBI:71302"/>
    </ligand>
</feature>
<name>MSRP_PECCP</name>
<protein>
    <recommendedName>
        <fullName evidence="1">Protein-methionine-sulfoxide reductase catalytic subunit MsrP</fullName>
        <ecNumber evidence="1">1.8.5.-</ecNumber>
    </recommendedName>
</protein>
<reference key="1">
    <citation type="submission" date="2009-07" db="EMBL/GenBank/DDBJ databases">
        <title>Complete sequence of Pectobacterium carotovorum subsp. carotovorum PC1.</title>
        <authorList>
            <consortium name="US DOE Joint Genome Institute"/>
            <person name="Lucas S."/>
            <person name="Copeland A."/>
            <person name="Lapidus A."/>
            <person name="Glavina del Rio T."/>
            <person name="Tice H."/>
            <person name="Bruce D."/>
            <person name="Goodwin L."/>
            <person name="Pitluck S."/>
            <person name="Munk A.C."/>
            <person name="Brettin T."/>
            <person name="Detter J.C."/>
            <person name="Han C."/>
            <person name="Tapia R."/>
            <person name="Larimer F."/>
            <person name="Land M."/>
            <person name="Hauser L."/>
            <person name="Kyrpides N."/>
            <person name="Mikhailova N."/>
            <person name="Balakrishnan V."/>
            <person name="Glasner J."/>
            <person name="Perna N.T."/>
        </authorList>
    </citation>
    <scope>NUCLEOTIDE SEQUENCE [LARGE SCALE GENOMIC DNA]</scope>
    <source>
        <strain>PC1</strain>
    </source>
</reference>
<dbReference type="EC" id="1.8.5.-" evidence="1"/>
<dbReference type="EMBL" id="CP001657">
    <property type="protein sequence ID" value="ACT11307.1"/>
    <property type="molecule type" value="Genomic_DNA"/>
</dbReference>
<dbReference type="RefSeq" id="WP_012772972.1">
    <property type="nucleotide sequence ID" value="NC_012917.1"/>
</dbReference>
<dbReference type="SMR" id="C6DIK7"/>
<dbReference type="STRING" id="561230.PC1_0247"/>
<dbReference type="GeneID" id="67795954"/>
<dbReference type="KEGG" id="pct:PC1_0247"/>
<dbReference type="eggNOG" id="COG2041">
    <property type="taxonomic scope" value="Bacteria"/>
</dbReference>
<dbReference type="HOGENOM" id="CLU_045520_0_0_6"/>
<dbReference type="OrthoDB" id="9795587at2"/>
<dbReference type="Proteomes" id="UP000002736">
    <property type="component" value="Chromosome"/>
</dbReference>
<dbReference type="GO" id="GO:0042597">
    <property type="term" value="C:periplasmic space"/>
    <property type="evidence" value="ECO:0007669"/>
    <property type="project" value="UniProtKB-SubCell"/>
</dbReference>
<dbReference type="GO" id="GO:0046872">
    <property type="term" value="F:metal ion binding"/>
    <property type="evidence" value="ECO:0007669"/>
    <property type="project" value="UniProtKB-KW"/>
</dbReference>
<dbReference type="GO" id="GO:0043546">
    <property type="term" value="F:molybdopterin cofactor binding"/>
    <property type="evidence" value="ECO:0007669"/>
    <property type="project" value="UniProtKB-UniRule"/>
</dbReference>
<dbReference type="GO" id="GO:0016672">
    <property type="term" value="F:oxidoreductase activity, acting on a sulfur group of donors, quinone or similar compound as acceptor"/>
    <property type="evidence" value="ECO:0007669"/>
    <property type="project" value="UniProtKB-UniRule"/>
</dbReference>
<dbReference type="GO" id="GO:0030091">
    <property type="term" value="P:protein repair"/>
    <property type="evidence" value="ECO:0007669"/>
    <property type="project" value="UniProtKB-UniRule"/>
</dbReference>
<dbReference type="CDD" id="cd02107">
    <property type="entry name" value="YedY_like_Moco"/>
    <property type="match status" value="1"/>
</dbReference>
<dbReference type="Gene3D" id="3.90.420.10">
    <property type="entry name" value="Oxidoreductase, molybdopterin-binding domain"/>
    <property type="match status" value="1"/>
</dbReference>
<dbReference type="HAMAP" id="MF_01206">
    <property type="entry name" value="MsrP"/>
    <property type="match status" value="1"/>
</dbReference>
<dbReference type="InterPro" id="IPR022867">
    <property type="entry name" value="MsrP"/>
</dbReference>
<dbReference type="InterPro" id="IPR000572">
    <property type="entry name" value="OxRdtase_Mopterin-bd_dom"/>
</dbReference>
<dbReference type="InterPro" id="IPR036374">
    <property type="entry name" value="OxRdtase_Mopterin-bd_sf"/>
</dbReference>
<dbReference type="InterPro" id="IPR006311">
    <property type="entry name" value="TAT_signal"/>
</dbReference>
<dbReference type="NCBIfam" id="NF003767">
    <property type="entry name" value="PRK05363.1"/>
    <property type="match status" value="1"/>
</dbReference>
<dbReference type="PANTHER" id="PTHR43032">
    <property type="entry name" value="PROTEIN-METHIONINE-SULFOXIDE REDUCTASE"/>
    <property type="match status" value="1"/>
</dbReference>
<dbReference type="PANTHER" id="PTHR43032:SF3">
    <property type="entry name" value="PROTEIN-METHIONINE-SULFOXIDE REDUCTASE CATALYTIC SUBUNIT MSRP"/>
    <property type="match status" value="1"/>
</dbReference>
<dbReference type="Pfam" id="PF00174">
    <property type="entry name" value="Oxidored_molyb"/>
    <property type="match status" value="1"/>
</dbReference>
<dbReference type="SUPFAM" id="SSF56524">
    <property type="entry name" value="Oxidoreductase molybdopterin-binding domain"/>
    <property type="match status" value="1"/>
</dbReference>
<dbReference type="PROSITE" id="PS51318">
    <property type="entry name" value="TAT"/>
    <property type="match status" value="1"/>
</dbReference>
<accession>C6DIK7</accession>
<comment type="function">
    <text evidence="1">Part of the MsrPQ system that repairs oxidized periplasmic proteins containing methionine sulfoxide residues (Met-O), using respiratory chain electrons. Thus protects these proteins from oxidative-stress damage caused by reactive species of oxygen and chlorine generated by the host defense mechanisms. MsrPQ is essential for the maintenance of envelope integrity under bleach stress, rescuing a wide series of structurally unrelated periplasmic proteins from methionine oxidation. The catalytic subunit MsrP is non-stereospecific, being able to reduce both (R-) and (S-) diastereoisomers of methionine sulfoxide.</text>
</comment>
<comment type="catalytic activity">
    <reaction evidence="1">
        <text>L-methionyl-[protein] + a quinone + H2O = L-methionyl-(S)-S-oxide-[protein] + a quinol</text>
        <dbReference type="Rhea" id="RHEA:51292"/>
        <dbReference type="Rhea" id="RHEA-COMP:12313"/>
        <dbReference type="Rhea" id="RHEA-COMP:12315"/>
        <dbReference type="ChEBI" id="CHEBI:15377"/>
        <dbReference type="ChEBI" id="CHEBI:16044"/>
        <dbReference type="ChEBI" id="CHEBI:24646"/>
        <dbReference type="ChEBI" id="CHEBI:44120"/>
        <dbReference type="ChEBI" id="CHEBI:132124"/>
    </reaction>
</comment>
<comment type="catalytic activity">
    <reaction evidence="1">
        <text>L-methionyl-[protein] + a quinone + H2O = L-methionyl-(R)-S-oxide-[protein] + a quinol</text>
        <dbReference type="Rhea" id="RHEA:51296"/>
        <dbReference type="Rhea" id="RHEA-COMP:12313"/>
        <dbReference type="Rhea" id="RHEA-COMP:12314"/>
        <dbReference type="ChEBI" id="CHEBI:15377"/>
        <dbReference type="ChEBI" id="CHEBI:16044"/>
        <dbReference type="ChEBI" id="CHEBI:24646"/>
        <dbReference type="ChEBI" id="CHEBI:45764"/>
        <dbReference type="ChEBI" id="CHEBI:132124"/>
    </reaction>
</comment>
<comment type="cofactor">
    <cofactor evidence="1">
        <name>Mo-molybdopterin</name>
        <dbReference type="ChEBI" id="CHEBI:71302"/>
    </cofactor>
    <text evidence="1">Binds 1 Mo-molybdopterin (Mo-MPT) cofactor per subunit.</text>
</comment>
<comment type="subunit">
    <text evidence="1">Heterodimer of a catalytic subunit (MsrP) and a heme-binding subunit (MsrQ).</text>
</comment>
<comment type="subcellular location">
    <subcellularLocation>
        <location evidence="1">Periplasm</location>
    </subcellularLocation>
    <text evidence="1">Is attached to the inner membrane when interacting with the MsrQ subunit.</text>
</comment>
<comment type="PTM">
    <text evidence="1">Predicted to be exported by the Tat system. The position of the signal peptide cleavage has not been experimentally proven.</text>
</comment>
<comment type="similarity">
    <text evidence="1">Belongs to the MsrP family.</text>
</comment>
<keyword id="KW-0479">Metal-binding</keyword>
<keyword id="KW-0500">Molybdenum</keyword>
<keyword id="KW-0560">Oxidoreductase</keyword>
<keyword id="KW-0574">Periplasm</keyword>
<keyword id="KW-0732">Signal</keyword>
<evidence type="ECO:0000255" key="1">
    <source>
        <dbReference type="HAMAP-Rule" id="MF_01206"/>
    </source>
</evidence>
<gene>
    <name evidence="1" type="primary">msrP</name>
    <name type="ordered locus">PC1_0247</name>
</gene>